<protein>
    <recommendedName>
        <fullName evidence="1">dTTP/UTP pyrophosphatase</fullName>
        <shortName evidence="1">dTTPase/UTPase</shortName>
        <ecNumber evidence="1">3.6.1.9</ecNumber>
    </recommendedName>
    <alternativeName>
        <fullName evidence="1">Nucleoside triphosphate pyrophosphatase</fullName>
    </alternativeName>
    <alternativeName>
        <fullName evidence="1">Nucleotide pyrophosphatase</fullName>
        <shortName evidence="1">Nucleotide PPase</shortName>
    </alternativeName>
</protein>
<evidence type="ECO:0000255" key="1">
    <source>
        <dbReference type="HAMAP-Rule" id="MF_00528"/>
    </source>
</evidence>
<gene>
    <name type="ordered locus">CHY_0340</name>
</gene>
<proteinExistence type="inferred from homology"/>
<name>NTPPA_CARHZ</name>
<reference key="1">
    <citation type="journal article" date="2005" name="PLoS Genet.">
        <title>Life in hot carbon monoxide: the complete genome sequence of Carboxydothermus hydrogenoformans Z-2901.</title>
        <authorList>
            <person name="Wu M."/>
            <person name="Ren Q."/>
            <person name="Durkin A.S."/>
            <person name="Daugherty S.C."/>
            <person name="Brinkac L.M."/>
            <person name="Dodson R.J."/>
            <person name="Madupu R."/>
            <person name="Sullivan S.A."/>
            <person name="Kolonay J.F."/>
            <person name="Nelson W.C."/>
            <person name="Tallon L.J."/>
            <person name="Jones K.M."/>
            <person name="Ulrich L.E."/>
            <person name="Gonzalez J.M."/>
            <person name="Zhulin I.B."/>
            <person name="Robb F.T."/>
            <person name="Eisen J.A."/>
        </authorList>
    </citation>
    <scope>NUCLEOTIDE SEQUENCE [LARGE SCALE GENOMIC DNA]</scope>
    <source>
        <strain>ATCC BAA-161 / DSM 6008 / Z-2901</strain>
    </source>
</reference>
<feature type="chain" id="PRO_0000267278" description="dTTP/UTP pyrophosphatase">
    <location>
        <begin position="1"/>
        <end position="186"/>
    </location>
</feature>
<feature type="active site" description="Proton acceptor" evidence="1">
    <location>
        <position position="67"/>
    </location>
</feature>
<feature type="site" description="Important for substrate specificity" evidence="1">
    <location>
        <position position="11"/>
    </location>
</feature>
<feature type="site" description="Important for substrate specificity" evidence="1">
    <location>
        <position position="68"/>
    </location>
</feature>
<feature type="site" description="Important for substrate specificity" evidence="1">
    <location>
        <position position="152"/>
    </location>
</feature>
<accession>Q3AF81</accession>
<sequence length="186" mass="21305">MKIYLASKSPRRQELLKKIYSRFEIIPPEVKEEVYSLNPMELALTLSRQKAENVAAKIKEGVIIAADTVVAVEGKVLGKPRDEEEAYFMLKTLSGREHEVYTGVTLMELPQKREKSFVEVTKVWFYPLTDEEIKSYIDSREPFDKAGAYGIQGKGALFVAKIEGCYFNVVGLPVARLYRELREWGY</sequence>
<organism>
    <name type="scientific">Carboxydothermus hydrogenoformans (strain ATCC BAA-161 / DSM 6008 / Z-2901)</name>
    <dbReference type="NCBI Taxonomy" id="246194"/>
    <lineage>
        <taxon>Bacteria</taxon>
        <taxon>Bacillati</taxon>
        <taxon>Bacillota</taxon>
        <taxon>Clostridia</taxon>
        <taxon>Thermoanaerobacterales</taxon>
        <taxon>Thermoanaerobacteraceae</taxon>
        <taxon>Carboxydothermus</taxon>
    </lineage>
</organism>
<dbReference type="EC" id="3.6.1.9" evidence="1"/>
<dbReference type="EMBL" id="CP000141">
    <property type="protein sequence ID" value="ABB16164.1"/>
    <property type="molecule type" value="Genomic_DNA"/>
</dbReference>
<dbReference type="RefSeq" id="WP_011343279.1">
    <property type="nucleotide sequence ID" value="NC_007503.1"/>
</dbReference>
<dbReference type="SMR" id="Q3AF81"/>
<dbReference type="FunCoup" id="Q3AF81">
    <property type="interactions" value="355"/>
</dbReference>
<dbReference type="STRING" id="246194.CHY_0340"/>
<dbReference type="KEGG" id="chy:CHY_0340"/>
<dbReference type="eggNOG" id="COG0424">
    <property type="taxonomic scope" value="Bacteria"/>
</dbReference>
<dbReference type="HOGENOM" id="CLU_040416_0_0_9"/>
<dbReference type="InParanoid" id="Q3AF81"/>
<dbReference type="OrthoDB" id="9807767at2"/>
<dbReference type="Proteomes" id="UP000002706">
    <property type="component" value="Chromosome"/>
</dbReference>
<dbReference type="GO" id="GO:0005737">
    <property type="term" value="C:cytoplasm"/>
    <property type="evidence" value="ECO:0007669"/>
    <property type="project" value="UniProtKB-SubCell"/>
</dbReference>
<dbReference type="GO" id="GO:0036218">
    <property type="term" value="F:dTTP diphosphatase activity"/>
    <property type="evidence" value="ECO:0007669"/>
    <property type="project" value="RHEA"/>
</dbReference>
<dbReference type="GO" id="GO:0036221">
    <property type="term" value="F:UTP diphosphatase activity"/>
    <property type="evidence" value="ECO:0007669"/>
    <property type="project" value="RHEA"/>
</dbReference>
<dbReference type="GO" id="GO:0009117">
    <property type="term" value="P:nucleotide metabolic process"/>
    <property type="evidence" value="ECO:0007669"/>
    <property type="project" value="UniProtKB-KW"/>
</dbReference>
<dbReference type="CDD" id="cd00555">
    <property type="entry name" value="Maf"/>
    <property type="match status" value="1"/>
</dbReference>
<dbReference type="Gene3D" id="3.90.950.10">
    <property type="match status" value="1"/>
</dbReference>
<dbReference type="HAMAP" id="MF_00528">
    <property type="entry name" value="Maf"/>
    <property type="match status" value="1"/>
</dbReference>
<dbReference type="InterPro" id="IPR029001">
    <property type="entry name" value="ITPase-like_fam"/>
</dbReference>
<dbReference type="InterPro" id="IPR003697">
    <property type="entry name" value="Maf-like"/>
</dbReference>
<dbReference type="NCBIfam" id="TIGR00172">
    <property type="entry name" value="maf"/>
    <property type="match status" value="1"/>
</dbReference>
<dbReference type="PANTHER" id="PTHR43213">
    <property type="entry name" value="BIFUNCTIONAL DTTP/UTP PYROPHOSPHATASE/METHYLTRANSFERASE PROTEIN-RELATED"/>
    <property type="match status" value="1"/>
</dbReference>
<dbReference type="PANTHER" id="PTHR43213:SF5">
    <property type="entry name" value="BIFUNCTIONAL DTTP_UTP PYROPHOSPHATASE_METHYLTRANSFERASE PROTEIN-RELATED"/>
    <property type="match status" value="1"/>
</dbReference>
<dbReference type="Pfam" id="PF02545">
    <property type="entry name" value="Maf"/>
    <property type="match status" value="1"/>
</dbReference>
<dbReference type="PIRSF" id="PIRSF006305">
    <property type="entry name" value="Maf"/>
    <property type="match status" value="1"/>
</dbReference>
<dbReference type="SUPFAM" id="SSF52972">
    <property type="entry name" value="ITPase-like"/>
    <property type="match status" value="1"/>
</dbReference>
<comment type="function">
    <text evidence="1">Nucleoside triphosphate pyrophosphatase that hydrolyzes dTTP and UTP. May have a dual role in cell division arrest and in preventing the incorporation of modified nucleotides into cellular nucleic acids.</text>
</comment>
<comment type="catalytic activity">
    <reaction evidence="1">
        <text>dTTP + H2O = dTMP + diphosphate + H(+)</text>
        <dbReference type="Rhea" id="RHEA:28534"/>
        <dbReference type="ChEBI" id="CHEBI:15377"/>
        <dbReference type="ChEBI" id="CHEBI:15378"/>
        <dbReference type="ChEBI" id="CHEBI:33019"/>
        <dbReference type="ChEBI" id="CHEBI:37568"/>
        <dbReference type="ChEBI" id="CHEBI:63528"/>
        <dbReference type="EC" id="3.6.1.9"/>
    </reaction>
</comment>
<comment type="catalytic activity">
    <reaction evidence="1">
        <text>UTP + H2O = UMP + diphosphate + H(+)</text>
        <dbReference type="Rhea" id="RHEA:29395"/>
        <dbReference type="ChEBI" id="CHEBI:15377"/>
        <dbReference type="ChEBI" id="CHEBI:15378"/>
        <dbReference type="ChEBI" id="CHEBI:33019"/>
        <dbReference type="ChEBI" id="CHEBI:46398"/>
        <dbReference type="ChEBI" id="CHEBI:57865"/>
        <dbReference type="EC" id="3.6.1.9"/>
    </reaction>
</comment>
<comment type="cofactor">
    <cofactor evidence="1">
        <name>a divalent metal cation</name>
        <dbReference type="ChEBI" id="CHEBI:60240"/>
    </cofactor>
</comment>
<comment type="subcellular location">
    <subcellularLocation>
        <location evidence="1">Cytoplasm</location>
    </subcellularLocation>
</comment>
<comment type="similarity">
    <text evidence="1">Belongs to the Maf family. YhdE subfamily.</text>
</comment>
<keyword id="KW-0963">Cytoplasm</keyword>
<keyword id="KW-0378">Hydrolase</keyword>
<keyword id="KW-0546">Nucleotide metabolism</keyword>
<keyword id="KW-1185">Reference proteome</keyword>